<organism>
    <name type="scientific">Prochlorococcus marinus (strain MIT 9515)</name>
    <dbReference type="NCBI Taxonomy" id="167542"/>
    <lineage>
        <taxon>Bacteria</taxon>
        <taxon>Bacillati</taxon>
        <taxon>Cyanobacteriota</taxon>
        <taxon>Cyanophyceae</taxon>
        <taxon>Synechococcales</taxon>
        <taxon>Prochlorococcaceae</taxon>
        <taxon>Prochlorococcus</taxon>
    </lineage>
</organism>
<sequence length="390" mass="43835">MDSFKFIQKKILLLGSGELGKELVVEAKRLGLEVIAIDKYENAPAMQLADHSFVINMNDKKTLINTIKKIEPDFVVPEIEALSIEALKELEEEGINIVPNARTVEITMNRHKIRDLASKELNIKTANFSYVFNAEELEMKSSEIGFPLLLKPLMSSSGKGQSLVKRKEDLLLAWEDALKNSRGKIEGVILEEFLNFDYEFTLLTVRKSSGENVFCEPIGHEQYKGDYQCSWQPLDMNESLINEARNMTNKILNNLNGSGIYGVEFFVRGKEVIFSELSPRPHDTGMVTLVSQNLNEFELHLRAFLNLPIPKISLLKPSATRVILSEKESINPSYTGLNEALEVENTKVLIFGKPTSKKGRRMGVVLSSDDDLNIARKNADKSASKIKIVS</sequence>
<reference key="1">
    <citation type="journal article" date="2007" name="PLoS Genet.">
        <title>Patterns and implications of gene gain and loss in the evolution of Prochlorococcus.</title>
        <authorList>
            <person name="Kettler G.C."/>
            <person name="Martiny A.C."/>
            <person name="Huang K."/>
            <person name="Zucker J."/>
            <person name="Coleman M.L."/>
            <person name="Rodrigue S."/>
            <person name="Chen F."/>
            <person name="Lapidus A."/>
            <person name="Ferriera S."/>
            <person name="Johnson J."/>
            <person name="Steglich C."/>
            <person name="Church G.M."/>
            <person name="Richardson P."/>
            <person name="Chisholm S.W."/>
        </authorList>
    </citation>
    <scope>NUCLEOTIDE SEQUENCE [LARGE SCALE GENOMIC DNA]</scope>
    <source>
        <strain>MIT 9515</strain>
    </source>
</reference>
<protein>
    <recommendedName>
        <fullName evidence="1">Formate-dependent phosphoribosylglycinamide formyltransferase</fullName>
        <ecNumber evidence="1">6.3.1.21</ecNumber>
    </recommendedName>
    <alternativeName>
        <fullName evidence="1">5'-phosphoribosylglycinamide transformylase 2</fullName>
    </alternativeName>
    <alternativeName>
        <fullName evidence="1">Formate-dependent GAR transformylase</fullName>
    </alternativeName>
    <alternativeName>
        <fullName evidence="1">GAR transformylase 2</fullName>
        <shortName evidence="1">GART 2</shortName>
    </alternativeName>
    <alternativeName>
        <fullName evidence="1">Non-folate glycinamide ribonucleotide transformylase</fullName>
    </alternativeName>
    <alternativeName>
        <fullName evidence="1">Phosphoribosylglycinamide formyltransferase 2</fullName>
    </alternativeName>
</protein>
<keyword id="KW-0067">ATP-binding</keyword>
<keyword id="KW-0436">Ligase</keyword>
<keyword id="KW-0460">Magnesium</keyword>
<keyword id="KW-0479">Metal-binding</keyword>
<keyword id="KW-0547">Nucleotide-binding</keyword>
<keyword id="KW-0658">Purine biosynthesis</keyword>
<feature type="chain" id="PRO_0000319204" description="Formate-dependent phosphoribosylglycinamide formyltransferase">
    <location>
        <begin position="1"/>
        <end position="390"/>
    </location>
</feature>
<feature type="domain" description="ATP-grasp" evidence="1">
    <location>
        <begin position="115"/>
        <end position="305"/>
    </location>
</feature>
<feature type="binding site" evidence="1">
    <location>
        <begin position="18"/>
        <end position="19"/>
    </location>
    <ligand>
        <name>N(1)-(5-phospho-beta-D-ribosyl)glycinamide</name>
        <dbReference type="ChEBI" id="CHEBI:143788"/>
    </ligand>
</feature>
<feature type="binding site" evidence="1">
    <location>
        <position position="78"/>
    </location>
    <ligand>
        <name>N(1)-(5-phospho-beta-D-ribosyl)glycinamide</name>
        <dbReference type="ChEBI" id="CHEBI:143788"/>
    </ligand>
</feature>
<feature type="binding site" evidence="1">
    <location>
        <position position="110"/>
    </location>
    <ligand>
        <name>ATP</name>
        <dbReference type="ChEBI" id="CHEBI:30616"/>
    </ligand>
</feature>
<feature type="binding site" evidence="1">
    <location>
        <position position="151"/>
    </location>
    <ligand>
        <name>ATP</name>
        <dbReference type="ChEBI" id="CHEBI:30616"/>
    </ligand>
</feature>
<feature type="binding site" evidence="1">
    <location>
        <begin position="156"/>
        <end position="161"/>
    </location>
    <ligand>
        <name>ATP</name>
        <dbReference type="ChEBI" id="CHEBI:30616"/>
    </ligand>
</feature>
<feature type="binding site" evidence="1">
    <location>
        <begin position="191"/>
        <end position="194"/>
    </location>
    <ligand>
        <name>ATP</name>
        <dbReference type="ChEBI" id="CHEBI:30616"/>
    </ligand>
</feature>
<feature type="binding site" evidence="1">
    <location>
        <position position="199"/>
    </location>
    <ligand>
        <name>ATP</name>
        <dbReference type="ChEBI" id="CHEBI:30616"/>
    </ligand>
</feature>
<feature type="binding site" evidence="1">
    <location>
        <position position="264"/>
    </location>
    <ligand>
        <name>Mg(2+)</name>
        <dbReference type="ChEBI" id="CHEBI:18420"/>
    </ligand>
</feature>
<feature type="binding site" evidence="1">
    <location>
        <position position="276"/>
    </location>
    <ligand>
        <name>Mg(2+)</name>
        <dbReference type="ChEBI" id="CHEBI:18420"/>
    </ligand>
</feature>
<feature type="binding site" evidence="1">
    <location>
        <position position="283"/>
    </location>
    <ligand>
        <name>N(1)-(5-phospho-beta-D-ribosyl)glycinamide</name>
        <dbReference type="ChEBI" id="CHEBI:143788"/>
    </ligand>
</feature>
<feature type="binding site" evidence="1">
    <location>
        <position position="353"/>
    </location>
    <ligand>
        <name>N(1)-(5-phospho-beta-D-ribosyl)glycinamide</name>
        <dbReference type="ChEBI" id="CHEBI:143788"/>
    </ligand>
</feature>
<feature type="binding site" evidence="1">
    <location>
        <begin position="360"/>
        <end position="361"/>
    </location>
    <ligand>
        <name>N(1)-(5-phospho-beta-D-ribosyl)glycinamide</name>
        <dbReference type="ChEBI" id="CHEBI:143788"/>
    </ligand>
</feature>
<dbReference type="EC" id="6.3.1.21" evidence="1"/>
<dbReference type="EMBL" id="CP000552">
    <property type="protein sequence ID" value="ABM72296.1"/>
    <property type="molecule type" value="Genomic_DNA"/>
</dbReference>
<dbReference type="RefSeq" id="WP_011820396.1">
    <property type="nucleotide sequence ID" value="NC_008817.1"/>
</dbReference>
<dbReference type="SMR" id="A2BWY5"/>
<dbReference type="STRING" id="167542.P9515_10891"/>
<dbReference type="GeneID" id="60201725"/>
<dbReference type="KEGG" id="pmc:P9515_10891"/>
<dbReference type="eggNOG" id="COG0027">
    <property type="taxonomic scope" value="Bacteria"/>
</dbReference>
<dbReference type="HOGENOM" id="CLU_011534_1_3_3"/>
<dbReference type="OrthoDB" id="9804625at2"/>
<dbReference type="UniPathway" id="UPA00074">
    <property type="reaction ID" value="UER00127"/>
</dbReference>
<dbReference type="Proteomes" id="UP000001589">
    <property type="component" value="Chromosome"/>
</dbReference>
<dbReference type="GO" id="GO:0005829">
    <property type="term" value="C:cytosol"/>
    <property type="evidence" value="ECO:0007669"/>
    <property type="project" value="TreeGrafter"/>
</dbReference>
<dbReference type="GO" id="GO:0005524">
    <property type="term" value="F:ATP binding"/>
    <property type="evidence" value="ECO:0007669"/>
    <property type="project" value="UniProtKB-UniRule"/>
</dbReference>
<dbReference type="GO" id="GO:0000287">
    <property type="term" value="F:magnesium ion binding"/>
    <property type="evidence" value="ECO:0007669"/>
    <property type="project" value="InterPro"/>
</dbReference>
<dbReference type="GO" id="GO:0043815">
    <property type="term" value="F:phosphoribosylglycinamide formyltransferase 2 activity"/>
    <property type="evidence" value="ECO:0007669"/>
    <property type="project" value="UniProtKB-UniRule"/>
</dbReference>
<dbReference type="GO" id="GO:0004644">
    <property type="term" value="F:phosphoribosylglycinamide formyltransferase activity"/>
    <property type="evidence" value="ECO:0007669"/>
    <property type="project" value="InterPro"/>
</dbReference>
<dbReference type="GO" id="GO:0006189">
    <property type="term" value="P:'de novo' IMP biosynthetic process"/>
    <property type="evidence" value="ECO:0007669"/>
    <property type="project" value="UniProtKB-UniRule"/>
</dbReference>
<dbReference type="Gene3D" id="3.40.50.20">
    <property type="match status" value="1"/>
</dbReference>
<dbReference type="Gene3D" id="3.30.1490.20">
    <property type="entry name" value="ATP-grasp fold, A domain"/>
    <property type="match status" value="1"/>
</dbReference>
<dbReference type="Gene3D" id="3.30.470.20">
    <property type="entry name" value="ATP-grasp fold, B domain"/>
    <property type="match status" value="1"/>
</dbReference>
<dbReference type="HAMAP" id="MF_01643">
    <property type="entry name" value="PurT"/>
    <property type="match status" value="1"/>
</dbReference>
<dbReference type="InterPro" id="IPR011761">
    <property type="entry name" value="ATP-grasp"/>
</dbReference>
<dbReference type="InterPro" id="IPR003135">
    <property type="entry name" value="ATP-grasp_carboxylate-amine"/>
</dbReference>
<dbReference type="InterPro" id="IPR013815">
    <property type="entry name" value="ATP_grasp_subdomain_1"/>
</dbReference>
<dbReference type="InterPro" id="IPR016185">
    <property type="entry name" value="PreATP-grasp_dom_sf"/>
</dbReference>
<dbReference type="InterPro" id="IPR005862">
    <property type="entry name" value="PurT"/>
</dbReference>
<dbReference type="InterPro" id="IPR054350">
    <property type="entry name" value="PurT/PurK_preATP-grasp"/>
</dbReference>
<dbReference type="InterPro" id="IPR048740">
    <property type="entry name" value="PurT_C"/>
</dbReference>
<dbReference type="InterPro" id="IPR011054">
    <property type="entry name" value="Rudment_hybrid_motif"/>
</dbReference>
<dbReference type="NCBIfam" id="NF006766">
    <property type="entry name" value="PRK09288.1"/>
    <property type="match status" value="1"/>
</dbReference>
<dbReference type="NCBIfam" id="TIGR01142">
    <property type="entry name" value="purT"/>
    <property type="match status" value="1"/>
</dbReference>
<dbReference type="PANTHER" id="PTHR43055">
    <property type="entry name" value="FORMATE-DEPENDENT PHOSPHORIBOSYLGLYCINAMIDE FORMYLTRANSFERASE"/>
    <property type="match status" value="1"/>
</dbReference>
<dbReference type="PANTHER" id="PTHR43055:SF1">
    <property type="entry name" value="FORMATE-DEPENDENT PHOSPHORIBOSYLGLYCINAMIDE FORMYLTRANSFERASE"/>
    <property type="match status" value="1"/>
</dbReference>
<dbReference type="Pfam" id="PF02222">
    <property type="entry name" value="ATP-grasp"/>
    <property type="match status" value="1"/>
</dbReference>
<dbReference type="Pfam" id="PF21244">
    <property type="entry name" value="PurT_C"/>
    <property type="match status" value="1"/>
</dbReference>
<dbReference type="Pfam" id="PF22660">
    <property type="entry name" value="RS_preATP-grasp-like"/>
    <property type="match status" value="1"/>
</dbReference>
<dbReference type="SUPFAM" id="SSF56059">
    <property type="entry name" value="Glutathione synthetase ATP-binding domain-like"/>
    <property type="match status" value="1"/>
</dbReference>
<dbReference type="SUPFAM" id="SSF52440">
    <property type="entry name" value="PreATP-grasp domain"/>
    <property type="match status" value="1"/>
</dbReference>
<dbReference type="SUPFAM" id="SSF51246">
    <property type="entry name" value="Rudiment single hybrid motif"/>
    <property type="match status" value="1"/>
</dbReference>
<dbReference type="PROSITE" id="PS50975">
    <property type="entry name" value="ATP_GRASP"/>
    <property type="match status" value="1"/>
</dbReference>
<proteinExistence type="inferred from homology"/>
<name>PURT_PROM5</name>
<comment type="function">
    <text evidence="1">Involved in the de novo purine biosynthesis. Catalyzes the transfer of formate to 5-phospho-ribosyl-glycinamide (GAR), producing 5-phospho-ribosyl-N-formylglycinamide (FGAR). Formate is provided by PurU via hydrolysis of 10-formyl-tetrahydrofolate.</text>
</comment>
<comment type="catalytic activity">
    <reaction evidence="1">
        <text>N(1)-(5-phospho-beta-D-ribosyl)glycinamide + formate + ATP = N(2)-formyl-N(1)-(5-phospho-beta-D-ribosyl)glycinamide + ADP + phosphate + H(+)</text>
        <dbReference type="Rhea" id="RHEA:24829"/>
        <dbReference type="ChEBI" id="CHEBI:15378"/>
        <dbReference type="ChEBI" id="CHEBI:15740"/>
        <dbReference type="ChEBI" id="CHEBI:30616"/>
        <dbReference type="ChEBI" id="CHEBI:43474"/>
        <dbReference type="ChEBI" id="CHEBI:143788"/>
        <dbReference type="ChEBI" id="CHEBI:147286"/>
        <dbReference type="ChEBI" id="CHEBI:456216"/>
        <dbReference type="EC" id="6.3.1.21"/>
    </reaction>
    <physiologicalReaction direction="left-to-right" evidence="1">
        <dbReference type="Rhea" id="RHEA:24830"/>
    </physiologicalReaction>
</comment>
<comment type="pathway">
    <text evidence="1">Purine metabolism; IMP biosynthesis via de novo pathway; N(2)-formyl-N(1)-(5-phospho-D-ribosyl)glycinamide from N(1)-(5-phospho-D-ribosyl)glycinamide (formate route): step 1/1.</text>
</comment>
<comment type="subunit">
    <text evidence="1">Homodimer.</text>
</comment>
<comment type="similarity">
    <text evidence="1">Belongs to the PurK/PurT family.</text>
</comment>
<evidence type="ECO:0000255" key="1">
    <source>
        <dbReference type="HAMAP-Rule" id="MF_01643"/>
    </source>
</evidence>
<gene>
    <name evidence="1" type="primary">purT</name>
    <name type="ordered locus">P9515_10891</name>
</gene>
<accession>A2BWY5</accession>